<feature type="initiator methionine" description="Removed" evidence="1">
    <location>
        <position position="1"/>
    </location>
</feature>
<feature type="chain" id="PRO_0000211998" description="Arginine kinase">
    <location>
        <begin position="2"/>
        <end position="357"/>
    </location>
</feature>
<feature type="domain" description="Phosphagen kinase N-terminal" evidence="3">
    <location>
        <begin position="9"/>
        <end position="91"/>
    </location>
</feature>
<feature type="domain" description="Phosphagen kinase C-terminal" evidence="4">
    <location>
        <begin position="119"/>
        <end position="356"/>
    </location>
</feature>
<feature type="binding site" evidence="2">
    <location>
        <begin position="64"/>
        <end position="68"/>
    </location>
    <ligand>
        <name>L-arginine</name>
        <dbReference type="ChEBI" id="CHEBI:32682"/>
    </ligand>
</feature>
<feature type="binding site" evidence="4">
    <location>
        <begin position="122"/>
        <end position="126"/>
    </location>
    <ligand>
        <name>ATP</name>
        <dbReference type="ChEBI" id="CHEBI:30616"/>
    </ligand>
</feature>
<feature type="binding site" evidence="4">
    <location>
        <position position="185"/>
    </location>
    <ligand>
        <name>ATP</name>
        <dbReference type="ChEBI" id="CHEBI:30616"/>
    </ligand>
</feature>
<feature type="binding site" evidence="2">
    <location>
        <position position="225"/>
    </location>
    <ligand>
        <name>L-arginine</name>
        <dbReference type="ChEBI" id="CHEBI:32682"/>
    </ligand>
</feature>
<feature type="binding site" evidence="4">
    <location>
        <position position="229"/>
    </location>
    <ligand>
        <name>ATP</name>
        <dbReference type="ChEBI" id="CHEBI:30616"/>
    </ligand>
</feature>
<feature type="binding site" evidence="2">
    <location>
        <position position="271"/>
    </location>
    <ligand>
        <name>L-arginine</name>
        <dbReference type="ChEBI" id="CHEBI:32682"/>
    </ligand>
</feature>
<feature type="binding site" evidence="4">
    <location>
        <begin position="280"/>
        <end position="284"/>
    </location>
    <ligand>
        <name>ATP</name>
        <dbReference type="ChEBI" id="CHEBI:30616"/>
    </ligand>
</feature>
<feature type="binding site" evidence="4">
    <location>
        <begin position="309"/>
        <end position="314"/>
    </location>
    <ligand>
        <name>ATP</name>
        <dbReference type="ChEBI" id="CHEBI:30616"/>
    </ligand>
</feature>
<feature type="binding site" evidence="2">
    <location>
        <position position="314"/>
    </location>
    <ligand>
        <name>L-arginine</name>
        <dbReference type="ChEBI" id="CHEBI:32682"/>
    </ligand>
</feature>
<feature type="modified residue" description="N-acetylalanine" evidence="1">
    <location>
        <position position="2"/>
    </location>
</feature>
<sequence length="357" mass="40339">MADAATIAKLDEGFKKLEAATDCKSLLKKYLTKDVFEQLKAKKTKLGATLLDVIQSGVENLDSGVGVYAPDAEAYTLFSPLFDPIIEDYHKGFKQTDKHPNKDFGDVTQFVNVDPDGKFVISTRVRCGRSMEGYPFNPCLTEAQYKEMESKVSSTLSNLEGELKGTYFPLTGMTKEVQQKLIDDHFLFKEGDRFLQAANACRYWPAGRGIYHNDNKTFLVWCNEEDHLRIISMQMGGDLGQVYRRLVSAVNEIEKRVPFSHHDRLGFLTFCPTNLGTTVRASVHIKLPKLAANREKLEEVAGRYSLQVRGTRGEHTEAEGGIYDISNKRRMGLTEFQAVKEMQDGILELIKIEKEMQ</sequence>
<comment type="catalytic activity">
    <reaction>
        <text>L-arginine + ATP = N(omega)-phospho-L-arginine + ADP + H(+)</text>
        <dbReference type="Rhea" id="RHEA:22940"/>
        <dbReference type="ChEBI" id="CHEBI:15378"/>
        <dbReference type="ChEBI" id="CHEBI:30616"/>
        <dbReference type="ChEBI" id="CHEBI:32682"/>
        <dbReference type="ChEBI" id="CHEBI:58477"/>
        <dbReference type="ChEBI" id="CHEBI:456216"/>
        <dbReference type="EC" id="2.7.3.3"/>
    </reaction>
</comment>
<comment type="similarity">
    <text evidence="3 4">Belongs to the ATP:guanido phosphotransferase family.</text>
</comment>
<dbReference type="EC" id="2.7.3.3"/>
<dbReference type="EMBL" id="AF233356">
    <property type="protein sequence ID" value="AAF43437.1"/>
    <property type="molecule type" value="mRNA"/>
</dbReference>
<dbReference type="SMR" id="Q9NH48"/>
<dbReference type="OrthoDB" id="430219at2759"/>
<dbReference type="BRENDA" id="2.7.3.3">
    <property type="organism ID" value="10211"/>
</dbReference>
<dbReference type="GO" id="GO:0005615">
    <property type="term" value="C:extracellular space"/>
    <property type="evidence" value="ECO:0007669"/>
    <property type="project" value="TreeGrafter"/>
</dbReference>
<dbReference type="GO" id="GO:0004054">
    <property type="term" value="F:arginine kinase activity"/>
    <property type="evidence" value="ECO:0000250"/>
    <property type="project" value="UniProtKB"/>
</dbReference>
<dbReference type="GO" id="GO:0005524">
    <property type="term" value="F:ATP binding"/>
    <property type="evidence" value="ECO:0007669"/>
    <property type="project" value="UniProtKB-KW"/>
</dbReference>
<dbReference type="GO" id="GO:0004111">
    <property type="term" value="F:creatine kinase activity"/>
    <property type="evidence" value="ECO:0007669"/>
    <property type="project" value="InterPro"/>
</dbReference>
<dbReference type="GO" id="GO:0046314">
    <property type="term" value="P:phosphocreatine biosynthetic process"/>
    <property type="evidence" value="ECO:0007669"/>
    <property type="project" value="InterPro"/>
</dbReference>
<dbReference type="CDD" id="cd07932">
    <property type="entry name" value="arginine_kinase_like"/>
    <property type="match status" value="1"/>
</dbReference>
<dbReference type="FunFam" id="3.30.590.10:FF:000006">
    <property type="entry name" value="Arginine kinase 1"/>
    <property type="match status" value="1"/>
</dbReference>
<dbReference type="FunFam" id="1.10.135.10:FF:000003">
    <property type="entry name" value="Three-domain arginine kinase"/>
    <property type="match status" value="1"/>
</dbReference>
<dbReference type="Gene3D" id="1.10.135.10">
    <property type="entry name" value="ATP:guanido phosphotransferase, N-terminal domain"/>
    <property type="match status" value="1"/>
</dbReference>
<dbReference type="Gene3D" id="3.30.590.10">
    <property type="entry name" value="Glutamine synthetase/guanido kinase, catalytic domain"/>
    <property type="match status" value="1"/>
</dbReference>
<dbReference type="InterPro" id="IPR000749">
    <property type="entry name" value="ATP-guanido_PTrfase"/>
</dbReference>
<dbReference type="InterPro" id="IPR022415">
    <property type="entry name" value="ATP-guanido_PTrfase_AS"/>
</dbReference>
<dbReference type="InterPro" id="IPR022414">
    <property type="entry name" value="ATP-guanido_PTrfase_cat"/>
</dbReference>
<dbReference type="InterPro" id="IPR022413">
    <property type="entry name" value="ATP-guanido_PTrfase_N"/>
</dbReference>
<dbReference type="InterPro" id="IPR036802">
    <property type="entry name" value="ATP-guanido_PTrfase_N_sf"/>
</dbReference>
<dbReference type="InterPro" id="IPR014746">
    <property type="entry name" value="Gln_synth/guanido_kin_cat_dom"/>
</dbReference>
<dbReference type="PANTHER" id="PTHR11547:SF38">
    <property type="entry name" value="ARGININE KINASE 1-RELATED"/>
    <property type="match status" value="1"/>
</dbReference>
<dbReference type="PANTHER" id="PTHR11547">
    <property type="entry name" value="ARGININE OR CREATINE KINASE"/>
    <property type="match status" value="1"/>
</dbReference>
<dbReference type="Pfam" id="PF00217">
    <property type="entry name" value="ATP-gua_Ptrans"/>
    <property type="match status" value="1"/>
</dbReference>
<dbReference type="Pfam" id="PF02807">
    <property type="entry name" value="ATP-gua_PtransN"/>
    <property type="match status" value="1"/>
</dbReference>
<dbReference type="SUPFAM" id="SSF55931">
    <property type="entry name" value="Glutamine synthetase/guanido kinase"/>
    <property type="match status" value="1"/>
</dbReference>
<dbReference type="SUPFAM" id="SSF48034">
    <property type="entry name" value="Guanido kinase N-terminal domain"/>
    <property type="match status" value="1"/>
</dbReference>
<dbReference type="PROSITE" id="PS00112">
    <property type="entry name" value="PHOSPHAGEN_KINASE"/>
    <property type="match status" value="1"/>
</dbReference>
<dbReference type="PROSITE" id="PS51510">
    <property type="entry name" value="PHOSPHAGEN_KINASE_C"/>
    <property type="match status" value="1"/>
</dbReference>
<dbReference type="PROSITE" id="PS51509">
    <property type="entry name" value="PHOSPHAGEN_KINASE_N"/>
    <property type="match status" value="1"/>
</dbReference>
<proteinExistence type="evidence at transcript level"/>
<reference key="1">
    <citation type="submission" date="2000-02" db="EMBL/GenBank/DDBJ databases">
        <title>Arginine kinase mRNA expression analysis in different haline species of crustaceans.</title>
        <authorList>
            <person name="Weihrauch D."/>
            <person name="Towle D.W."/>
        </authorList>
    </citation>
    <scope>NUCLEOTIDE SEQUENCE [MRNA]</scope>
    <source>
        <tissue>Gill</tissue>
    </source>
</reference>
<organism>
    <name type="scientific">Eriocheir sinensis</name>
    <name type="common">Chinese mitten crab</name>
    <dbReference type="NCBI Taxonomy" id="95602"/>
    <lineage>
        <taxon>Eukaryota</taxon>
        <taxon>Metazoa</taxon>
        <taxon>Ecdysozoa</taxon>
        <taxon>Arthropoda</taxon>
        <taxon>Crustacea</taxon>
        <taxon>Multicrustacea</taxon>
        <taxon>Malacostraca</taxon>
        <taxon>Eumalacostraca</taxon>
        <taxon>Eucarida</taxon>
        <taxon>Decapoda</taxon>
        <taxon>Pleocyemata</taxon>
        <taxon>Brachyura</taxon>
        <taxon>Eubrachyura</taxon>
        <taxon>Grapsoidea</taxon>
        <taxon>Varunidae</taxon>
        <taxon>Eriocheir</taxon>
    </lineage>
</organism>
<name>KARG_ERISI</name>
<accession>Q9NH48</accession>
<keyword id="KW-0007">Acetylation</keyword>
<keyword id="KW-0067">ATP-binding</keyword>
<keyword id="KW-0418">Kinase</keyword>
<keyword id="KW-0547">Nucleotide-binding</keyword>
<keyword id="KW-0808">Transferase</keyword>
<evidence type="ECO:0000250" key="1"/>
<evidence type="ECO:0000250" key="2">
    <source>
        <dbReference type="UniProtKB" id="Q004B5"/>
    </source>
</evidence>
<evidence type="ECO:0000255" key="3">
    <source>
        <dbReference type="PROSITE-ProRule" id="PRU00842"/>
    </source>
</evidence>
<evidence type="ECO:0000255" key="4">
    <source>
        <dbReference type="PROSITE-ProRule" id="PRU00843"/>
    </source>
</evidence>
<protein>
    <recommendedName>
        <fullName>Arginine kinase</fullName>
        <shortName>AK</shortName>
        <ecNumber>2.7.3.3</ecNumber>
    </recommendedName>
</protein>